<comment type="similarity">
    <text evidence="1">Belongs to the UPF0398 family.</text>
</comment>
<dbReference type="EMBL" id="CP000517">
    <property type="protein sequence ID" value="ABX27279.1"/>
    <property type="molecule type" value="Genomic_DNA"/>
</dbReference>
<dbReference type="RefSeq" id="WP_012211945.1">
    <property type="nucleotide sequence ID" value="NC_010080.1"/>
</dbReference>
<dbReference type="SMR" id="A8YVJ2"/>
<dbReference type="KEGG" id="lhe:lhv_1265"/>
<dbReference type="eggNOG" id="COG4474">
    <property type="taxonomic scope" value="Bacteria"/>
</dbReference>
<dbReference type="HOGENOM" id="CLU_105319_0_0_9"/>
<dbReference type="Proteomes" id="UP000000790">
    <property type="component" value="Chromosome"/>
</dbReference>
<dbReference type="Gene3D" id="3.40.50.450">
    <property type="match status" value="1"/>
</dbReference>
<dbReference type="HAMAP" id="MF_01575">
    <property type="entry name" value="UPF0398"/>
    <property type="match status" value="1"/>
</dbReference>
<dbReference type="InterPro" id="IPR010697">
    <property type="entry name" value="YspA"/>
</dbReference>
<dbReference type="NCBIfam" id="NF010181">
    <property type="entry name" value="PRK13660.1"/>
    <property type="match status" value="1"/>
</dbReference>
<dbReference type="PANTHER" id="PTHR38440:SF1">
    <property type="entry name" value="UPF0398 PROTEIN SPR0331"/>
    <property type="match status" value="1"/>
</dbReference>
<dbReference type="PANTHER" id="PTHR38440">
    <property type="entry name" value="UPF0398 PROTEIN YPSA"/>
    <property type="match status" value="1"/>
</dbReference>
<dbReference type="Pfam" id="PF06908">
    <property type="entry name" value="YpsA"/>
    <property type="match status" value="1"/>
</dbReference>
<dbReference type="PIRSF" id="PIRSF021290">
    <property type="entry name" value="DUF1273"/>
    <property type="match status" value="1"/>
</dbReference>
<dbReference type="SUPFAM" id="SSF102405">
    <property type="entry name" value="MCP/YpsA-like"/>
    <property type="match status" value="1"/>
</dbReference>
<evidence type="ECO:0000255" key="1">
    <source>
        <dbReference type="HAMAP-Rule" id="MF_01575"/>
    </source>
</evidence>
<name>Y1265_LACH4</name>
<feature type="chain" id="PRO_1000073603" description="UPF0398 protein lhv_1265">
    <location>
        <begin position="1"/>
        <end position="189"/>
    </location>
</feature>
<proteinExistence type="inferred from homology"/>
<gene>
    <name type="ordered locus">lhv_1265</name>
</gene>
<organism>
    <name type="scientific">Lactobacillus helveticus (strain DPC 4571)</name>
    <dbReference type="NCBI Taxonomy" id="405566"/>
    <lineage>
        <taxon>Bacteria</taxon>
        <taxon>Bacillati</taxon>
        <taxon>Bacillota</taxon>
        <taxon>Bacilli</taxon>
        <taxon>Lactobacillales</taxon>
        <taxon>Lactobacillaceae</taxon>
        <taxon>Lactobacillus</taxon>
    </lineage>
</organism>
<accession>A8YVJ2</accession>
<sequence length="189" mass="22669">MQRLWVTGYRSYELNVFGDKDPKIIIIKYALKNYFKGLLENDQLDWIITGANLGVEQWTAEVGLELGQKYPLRTSIMIPYEKFADRWNENNQTKFLNLKERVDFFASTSNLPYQNPVQLRNYQNFMLQHTDRALMVYDTEHPGKSKYDYNLIQKYQKAEEYPLDLIDFYDLQDVAEEYQEAHQRNYFSE</sequence>
<protein>
    <recommendedName>
        <fullName evidence="1">UPF0398 protein lhv_1265</fullName>
    </recommendedName>
</protein>
<reference key="1">
    <citation type="journal article" date="2008" name="J. Bacteriol.">
        <title>Genome sequence of Lactobacillus helveticus: an organism distinguished by selective gene loss and IS element expansion.</title>
        <authorList>
            <person name="Callanan M."/>
            <person name="Kaleta P."/>
            <person name="O'Callaghan J."/>
            <person name="O'Sullivan O."/>
            <person name="Jordan K."/>
            <person name="McAuliffe O."/>
            <person name="Sangrador-Vegas A."/>
            <person name="Slattery L."/>
            <person name="Fitzgerald G.F."/>
            <person name="Beresford T."/>
            <person name="Ross R.P."/>
        </authorList>
    </citation>
    <scope>NUCLEOTIDE SEQUENCE [LARGE SCALE GENOMIC DNA]</scope>
    <source>
        <strain>DPC 4571</strain>
    </source>
</reference>